<proteinExistence type="inferred from homology"/>
<organism>
    <name type="scientific">Mesoplasma florum (strain ATCC 33453 / NBRC 100688 / NCTC 11704 / L1)</name>
    <name type="common">Acholeplasma florum</name>
    <dbReference type="NCBI Taxonomy" id="265311"/>
    <lineage>
        <taxon>Bacteria</taxon>
        <taxon>Bacillati</taxon>
        <taxon>Mycoplasmatota</taxon>
        <taxon>Mollicutes</taxon>
        <taxon>Entomoplasmatales</taxon>
        <taxon>Entomoplasmataceae</taxon>
        <taxon>Mesoplasma</taxon>
    </lineage>
</organism>
<gene>
    <name evidence="1" type="primary">purA</name>
    <name type="ordered locus">Mfl074</name>
</gene>
<name>PURA_MESFL</name>
<feature type="chain" id="PRO_0000224292" description="Adenylosuccinate synthetase">
    <location>
        <begin position="1"/>
        <end position="429"/>
    </location>
</feature>
<feature type="active site" description="Proton acceptor" evidence="1">
    <location>
        <position position="16"/>
    </location>
</feature>
<feature type="active site" description="Proton donor" evidence="1">
    <location>
        <position position="44"/>
    </location>
</feature>
<feature type="binding site" evidence="1">
    <location>
        <begin position="15"/>
        <end position="21"/>
    </location>
    <ligand>
        <name>GTP</name>
        <dbReference type="ChEBI" id="CHEBI:37565"/>
    </ligand>
</feature>
<feature type="binding site" description="in other chain" evidence="1">
    <location>
        <begin position="16"/>
        <end position="19"/>
    </location>
    <ligand>
        <name>IMP</name>
        <dbReference type="ChEBI" id="CHEBI:58053"/>
        <note>ligand shared between dimeric partners</note>
    </ligand>
</feature>
<feature type="binding site" evidence="1">
    <location>
        <position position="16"/>
    </location>
    <ligand>
        <name>Mg(2+)</name>
        <dbReference type="ChEBI" id="CHEBI:18420"/>
    </ligand>
</feature>
<feature type="binding site" description="in other chain" evidence="1">
    <location>
        <begin position="41"/>
        <end position="44"/>
    </location>
    <ligand>
        <name>IMP</name>
        <dbReference type="ChEBI" id="CHEBI:58053"/>
        <note>ligand shared between dimeric partners</note>
    </ligand>
</feature>
<feature type="binding site" evidence="1">
    <location>
        <begin position="43"/>
        <end position="45"/>
    </location>
    <ligand>
        <name>GTP</name>
        <dbReference type="ChEBI" id="CHEBI:37565"/>
    </ligand>
</feature>
<feature type="binding site" evidence="1">
    <location>
        <position position="43"/>
    </location>
    <ligand>
        <name>Mg(2+)</name>
        <dbReference type="ChEBI" id="CHEBI:18420"/>
    </ligand>
</feature>
<feature type="binding site" description="in other chain" evidence="1">
    <location>
        <position position="131"/>
    </location>
    <ligand>
        <name>IMP</name>
        <dbReference type="ChEBI" id="CHEBI:58053"/>
        <note>ligand shared between dimeric partners</note>
    </ligand>
</feature>
<feature type="binding site" evidence="1">
    <location>
        <position position="145"/>
    </location>
    <ligand>
        <name>IMP</name>
        <dbReference type="ChEBI" id="CHEBI:58053"/>
        <note>ligand shared between dimeric partners</note>
    </ligand>
</feature>
<feature type="binding site" description="in other chain" evidence="1">
    <location>
        <position position="225"/>
    </location>
    <ligand>
        <name>IMP</name>
        <dbReference type="ChEBI" id="CHEBI:58053"/>
        <note>ligand shared between dimeric partners</note>
    </ligand>
</feature>
<feature type="binding site" description="in other chain" evidence="1">
    <location>
        <position position="240"/>
    </location>
    <ligand>
        <name>IMP</name>
        <dbReference type="ChEBI" id="CHEBI:58053"/>
        <note>ligand shared between dimeric partners</note>
    </ligand>
</feature>
<feature type="binding site" evidence="1">
    <location>
        <begin position="300"/>
        <end position="306"/>
    </location>
    <ligand>
        <name>substrate</name>
    </ligand>
</feature>
<feature type="binding site" description="in other chain" evidence="1">
    <location>
        <position position="304"/>
    </location>
    <ligand>
        <name>IMP</name>
        <dbReference type="ChEBI" id="CHEBI:58053"/>
        <note>ligand shared between dimeric partners</note>
    </ligand>
</feature>
<feature type="binding site" evidence="1">
    <location>
        <position position="306"/>
    </location>
    <ligand>
        <name>GTP</name>
        <dbReference type="ChEBI" id="CHEBI:37565"/>
    </ligand>
</feature>
<feature type="binding site" evidence="1">
    <location>
        <begin position="332"/>
        <end position="334"/>
    </location>
    <ligand>
        <name>GTP</name>
        <dbReference type="ChEBI" id="CHEBI:37565"/>
    </ligand>
</feature>
<feature type="binding site" evidence="1">
    <location>
        <begin position="414"/>
        <end position="416"/>
    </location>
    <ligand>
        <name>GTP</name>
        <dbReference type="ChEBI" id="CHEBI:37565"/>
    </ligand>
</feature>
<comment type="function">
    <text evidence="1">Plays an important role in the de novo pathway of purine nucleotide biosynthesis. Catalyzes the first committed step in the biosynthesis of AMP from IMP.</text>
</comment>
<comment type="catalytic activity">
    <reaction evidence="1">
        <text>IMP + L-aspartate + GTP = N(6)-(1,2-dicarboxyethyl)-AMP + GDP + phosphate + 2 H(+)</text>
        <dbReference type="Rhea" id="RHEA:15753"/>
        <dbReference type="ChEBI" id="CHEBI:15378"/>
        <dbReference type="ChEBI" id="CHEBI:29991"/>
        <dbReference type="ChEBI" id="CHEBI:37565"/>
        <dbReference type="ChEBI" id="CHEBI:43474"/>
        <dbReference type="ChEBI" id="CHEBI:57567"/>
        <dbReference type="ChEBI" id="CHEBI:58053"/>
        <dbReference type="ChEBI" id="CHEBI:58189"/>
        <dbReference type="EC" id="6.3.4.4"/>
    </reaction>
</comment>
<comment type="cofactor">
    <cofactor evidence="1">
        <name>Mg(2+)</name>
        <dbReference type="ChEBI" id="CHEBI:18420"/>
    </cofactor>
    <text evidence="1">Binds 1 Mg(2+) ion per subunit.</text>
</comment>
<comment type="pathway">
    <text evidence="1">Purine metabolism; AMP biosynthesis via de novo pathway; AMP from IMP: step 1/2.</text>
</comment>
<comment type="subunit">
    <text evidence="1">Homodimer.</text>
</comment>
<comment type="subcellular location">
    <subcellularLocation>
        <location evidence="1">Cytoplasm</location>
    </subcellularLocation>
</comment>
<comment type="similarity">
    <text evidence="1">Belongs to the adenylosuccinate synthetase family.</text>
</comment>
<accession>Q6F243</accession>
<keyword id="KW-0963">Cytoplasm</keyword>
<keyword id="KW-0342">GTP-binding</keyword>
<keyword id="KW-0436">Ligase</keyword>
<keyword id="KW-0460">Magnesium</keyword>
<keyword id="KW-0479">Metal-binding</keyword>
<keyword id="KW-0547">Nucleotide-binding</keyword>
<keyword id="KW-0658">Purine biosynthesis</keyword>
<keyword id="KW-1185">Reference proteome</keyword>
<reference key="1">
    <citation type="submission" date="2004-06" db="EMBL/GenBank/DDBJ databases">
        <authorList>
            <person name="Birren B.W."/>
            <person name="Stange-Thomann N."/>
            <person name="Hafez N."/>
            <person name="DeCaprio D."/>
            <person name="Fisher S."/>
            <person name="Butler J."/>
            <person name="Elkins T."/>
            <person name="Kodira C.D."/>
            <person name="Major J."/>
            <person name="Wang S."/>
            <person name="Nicol R."/>
            <person name="Nusbaum C."/>
        </authorList>
    </citation>
    <scope>NUCLEOTIDE SEQUENCE [LARGE SCALE GENOMIC DNA]</scope>
    <source>
        <strain>ATCC 33453 / NBRC 100688 / NCTC 11704 / L1</strain>
    </source>
</reference>
<dbReference type="EC" id="6.3.4.4" evidence="1"/>
<dbReference type="EMBL" id="AE017263">
    <property type="protein sequence ID" value="AAT75430.1"/>
    <property type="molecule type" value="Genomic_DNA"/>
</dbReference>
<dbReference type="RefSeq" id="WP_011182971.1">
    <property type="nucleotide sequence ID" value="NC_006055.1"/>
</dbReference>
<dbReference type="RefSeq" id="YP_053314.1">
    <property type="nucleotide sequence ID" value="NC_006055.1"/>
</dbReference>
<dbReference type="SMR" id="Q6F243"/>
<dbReference type="STRING" id="265311.Mfl074"/>
<dbReference type="PaxDb" id="265311-Mfl074"/>
<dbReference type="EnsemblBacteria" id="AAT75430">
    <property type="protein sequence ID" value="AAT75430"/>
    <property type="gene ID" value="Mfl074"/>
</dbReference>
<dbReference type="GeneID" id="2897707"/>
<dbReference type="KEGG" id="mfl:Mfl074"/>
<dbReference type="PATRIC" id="fig|265311.5.peg.74"/>
<dbReference type="eggNOG" id="COG0104">
    <property type="taxonomic scope" value="Bacteria"/>
</dbReference>
<dbReference type="HOGENOM" id="CLU_029848_0_0_14"/>
<dbReference type="OrthoDB" id="9807553at2"/>
<dbReference type="UniPathway" id="UPA00075">
    <property type="reaction ID" value="UER00335"/>
</dbReference>
<dbReference type="Proteomes" id="UP000006647">
    <property type="component" value="Chromosome"/>
</dbReference>
<dbReference type="GO" id="GO:0005737">
    <property type="term" value="C:cytoplasm"/>
    <property type="evidence" value="ECO:0007669"/>
    <property type="project" value="UniProtKB-SubCell"/>
</dbReference>
<dbReference type="GO" id="GO:0004019">
    <property type="term" value="F:adenylosuccinate synthase activity"/>
    <property type="evidence" value="ECO:0007669"/>
    <property type="project" value="UniProtKB-UniRule"/>
</dbReference>
<dbReference type="GO" id="GO:0005525">
    <property type="term" value="F:GTP binding"/>
    <property type="evidence" value="ECO:0007669"/>
    <property type="project" value="UniProtKB-UniRule"/>
</dbReference>
<dbReference type="GO" id="GO:0000287">
    <property type="term" value="F:magnesium ion binding"/>
    <property type="evidence" value="ECO:0007669"/>
    <property type="project" value="UniProtKB-UniRule"/>
</dbReference>
<dbReference type="GO" id="GO:0044208">
    <property type="term" value="P:'de novo' AMP biosynthetic process"/>
    <property type="evidence" value="ECO:0007669"/>
    <property type="project" value="UniProtKB-UniRule"/>
</dbReference>
<dbReference type="GO" id="GO:0046040">
    <property type="term" value="P:IMP metabolic process"/>
    <property type="evidence" value="ECO:0007669"/>
    <property type="project" value="TreeGrafter"/>
</dbReference>
<dbReference type="CDD" id="cd03108">
    <property type="entry name" value="AdSS"/>
    <property type="match status" value="1"/>
</dbReference>
<dbReference type="FunFam" id="1.10.300.10:FF:000001">
    <property type="entry name" value="Adenylosuccinate synthetase"/>
    <property type="match status" value="1"/>
</dbReference>
<dbReference type="FunFam" id="3.90.170.10:FF:000001">
    <property type="entry name" value="Adenylosuccinate synthetase"/>
    <property type="match status" value="1"/>
</dbReference>
<dbReference type="Gene3D" id="3.40.440.10">
    <property type="entry name" value="Adenylosuccinate Synthetase, subunit A, domain 1"/>
    <property type="match status" value="1"/>
</dbReference>
<dbReference type="Gene3D" id="1.10.300.10">
    <property type="entry name" value="Adenylosuccinate Synthetase, subunit A, domain 2"/>
    <property type="match status" value="1"/>
</dbReference>
<dbReference type="Gene3D" id="3.90.170.10">
    <property type="entry name" value="Adenylosuccinate Synthetase, subunit A, domain 3"/>
    <property type="match status" value="1"/>
</dbReference>
<dbReference type="HAMAP" id="MF_00011">
    <property type="entry name" value="Adenylosucc_synth"/>
    <property type="match status" value="1"/>
</dbReference>
<dbReference type="InterPro" id="IPR018220">
    <property type="entry name" value="Adenylosuccin_syn_GTP-bd"/>
</dbReference>
<dbReference type="InterPro" id="IPR033128">
    <property type="entry name" value="Adenylosuccin_syn_Lys_AS"/>
</dbReference>
<dbReference type="InterPro" id="IPR042109">
    <property type="entry name" value="Adenylosuccinate_synth_dom1"/>
</dbReference>
<dbReference type="InterPro" id="IPR042110">
    <property type="entry name" value="Adenylosuccinate_synth_dom2"/>
</dbReference>
<dbReference type="InterPro" id="IPR042111">
    <property type="entry name" value="Adenylosuccinate_synth_dom3"/>
</dbReference>
<dbReference type="InterPro" id="IPR001114">
    <property type="entry name" value="Adenylosuccinate_synthetase"/>
</dbReference>
<dbReference type="InterPro" id="IPR027417">
    <property type="entry name" value="P-loop_NTPase"/>
</dbReference>
<dbReference type="NCBIfam" id="NF002223">
    <property type="entry name" value="PRK01117.1"/>
    <property type="match status" value="1"/>
</dbReference>
<dbReference type="NCBIfam" id="TIGR00184">
    <property type="entry name" value="purA"/>
    <property type="match status" value="1"/>
</dbReference>
<dbReference type="PANTHER" id="PTHR11846">
    <property type="entry name" value="ADENYLOSUCCINATE SYNTHETASE"/>
    <property type="match status" value="1"/>
</dbReference>
<dbReference type="PANTHER" id="PTHR11846:SF0">
    <property type="entry name" value="ADENYLOSUCCINATE SYNTHETASE"/>
    <property type="match status" value="1"/>
</dbReference>
<dbReference type="Pfam" id="PF00709">
    <property type="entry name" value="Adenylsucc_synt"/>
    <property type="match status" value="1"/>
</dbReference>
<dbReference type="SMART" id="SM00788">
    <property type="entry name" value="Adenylsucc_synt"/>
    <property type="match status" value="1"/>
</dbReference>
<dbReference type="SUPFAM" id="SSF52540">
    <property type="entry name" value="P-loop containing nucleoside triphosphate hydrolases"/>
    <property type="match status" value="1"/>
</dbReference>
<dbReference type="PROSITE" id="PS01266">
    <property type="entry name" value="ADENYLOSUCCIN_SYN_1"/>
    <property type="match status" value="1"/>
</dbReference>
<dbReference type="PROSITE" id="PS00513">
    <property type="entry name" value="ADENYLOSUCCIN_SYN_2"/>
    <property type="match status" value="1"/>
</dbReference>
<evidence type="ECO:0000255" key="1">
    <source>
        <dbReference type="HAMAP-Rule" id="MF_00011"/>
    </source>
</evidence>
<sequence length="429" mass="47438">MREINSLVVVGSQWGDEGKGKMTDYFAQKADVVVRFAGGDNAGHVINFNGQKHKVTIIPSGIFNSEVTSVIGNGCAVNLINLVKELETIKNSGVKLGKLLISDRAQLILPYHILIDGAQEESRGARKIGTTKRGIGPTYQDKAARLGIRVADIEEEDFKETFKEIFEYQMMFLDRMFNVESIDFEETYANLINAYNVIKDCVTDTGIFVEQAIKNGKKVLFEGAQGALLDIDHGTYPYVTSSNTSANNASTGTGISHKLINNTLGVVKAYSTRVGAGAFPTELLNEVGDGIRERGHEYGSNTKRPRRVGWLDLVALKHAIRTSGIDYLFITLLDVLSGVEELLICDKYILNGEEINYIPATSSKHEKCKANYISMPGWKEDITKVKHFEELPLNAKNYLNKIAEICEVEISGFSVGPDRLQTVITKEIM</sequence>
<protein>
    <recommendedName>
        <fullName evidence="1">Adenylosuccinate synthetase</fullName>
        <shortName evidence="1">AMPSase</shortName>
        <shortName evidence="1">AdSS</shortName>
        <ecNumber evidence="1">6.3.4.4</ecNumber>
    </recommendedName>
    <alternativeName>
        <fullName evidence="1">IMP--aspartate ligase</fullName>
    </alternativeName>
</protein>